<gene>
    <name evidence="1" type="primary">glnD</name>
    <name type="ordered locus">SCO5585</name>
    <name type="ORF">SC2E1.02</name>
</gene>
<reference key="1">
    <citation type="journal article" date="2002" name="Nature">
        <title>Complete genome sequence of the model actinomycete Streptomyces coelicolor A3(2).</title>
        <authorList>
            <person name="Bentley S.D."/>
            <person name="Chater K.F."/>
            <person name="Cerdeno-Tarraga A.-M."/>
            <person name="Challis G.L."/>
            <person name="Thomson N.R."/>
            <person name="James K.D."/>
            <person name="Harris D.E."/>
            <person name="Quail M.A."/>
            <person name="Kieser H."/>
            <person name="Harper D."/>
            <person name="Bateman A."/>
            <person name="Brown S."/>
            <person name="Chandra G."/>
            <person name="Chen C.W."/>
            <person name="Collins M."/>
            <person name="Cronin A."/>
            <person name="Fraser A."/>
            <person name="Goble A."/>
            <person name="Hidalgo J."/>
            <person name="Hornsby T."/>
            <person name="Howarth S."/>
            <person name="Huang C.-H."/>
            <person name="Kieser T."/>
            <person name="Larke L."/>
            <person name="Murphy L.D."/>
            <person name="Oliver K."/>
            <person name="O'Neil S."/>
            <person name="Rabbinowitsch E."/>
            <person name="Rajandream M.A."/>
            <person name="Rutherford K.M."/>
            <person name="Rutter S."/>
            <person name="Seeger K."/>
            <person name="Saunders D."/>
            <person name="Sharp S."/>
            <person name="Squares R."/>
            <person name="Squares S."/>
            <person name="Taylor K."/>
            <person name="Warren T."/>
            <person name="Wietzorrek A."/>
            <person name="Woodward J.R."/>
            <person name="Barrell B.G."/>
            <person name="Parkhill J."/>
            <person name="Hopwood D.A."/>
        </authorList>
    </citation>
    <scope>NUCLEOTIDE SEQUENCE [LARGE SCALE GENOMIC DNA]</scope>
    <source>
        <strain>ATCC BAA-471 / A3(2) / M145</strain>
    </source>
</reference>
<keyword id="KW-0378">Hydrolase</keyword>
<keyword id="KW-0460">Magnesium</keyword>
<keyword id="KW-0511">Multifunctional enzyme</keyword>
<keyword id="KW-0548">Nucleotidyltransferase</keyword>
<keyword id="KW-1185">Reference proteome</keyword>
<keyword id="KW-0677">Repeat</keyword>
<keyword id="KW-0808">Transferase</keyword>
<proteinExistence type="inferred from homology"/>
<comment type="function">
    <text evidence="1">Modifies, by uridylylation and deuridylylation, the PII regulatory proteins (GlnB and homologs), in response to the nitrogen status of the cell that GlnD senses through the glutamine level. Under low glutamine levels, catalyzes the conversion of the PII proteins and UTP to PII-UMP and PPi, while under higher glutamine levels, GlnD hydrolyzes PII-UMP to PII and UMP (deuridylylation). Thus, controls uridylylation state and activity of the PII proteins, and plays an important role in the regulation of nitrogen assimilation and metabolism.</text>
</comment>
<comment type="catalytic activity">
    <reaction evidence="1">
        <text>[protein-PII]-L-tyrosine + UTP = [protein-PII]-uridylyl-L-tyrosine + diphosphate</text>
        <dbReference type="Rhea" id="RHEA:13673"/>
        <dbReference type="Rhea" id="RHEA-COMP:12147"/>
        <dbReference type="Rhea" id="RHEA-COMP:12148"/>
        <dbReference type="ChEBI" id="CHEBI:33019"/>
        <dbReference type="ChEBI" id="CHEBI:46398"/>
        <dbReference type="ChEBI" id="CHEBI:46858"/>
        <dbReference type="ChEBI" id="CHEBI:90602"/>
        <dbReference type="EC" id="2.7.7.59"/>
    </reaction>
</comment>
<comment type="catalytic activity">
    <reaction evidence="1">
        <text>[protein-PII]-uridylyl-L-tyrosine + H2O = [protein-PII]-L-tyrosine + UMP + H(+)</text>
        <dbReference type="Rhea" id="RHEA:48600"/>
        <dbReference type="Rhea" id="RHEA-COMP:12147"/>
        <dbReference type="Rhea" id="RHEA-COMP:12148"/>
        <dbReference type="ChEBI" id="CHEBI:15377"/>
        <dbReference type="ChEBI" id="CHEBI:15378"/>
        <dbReference type="ChEBI" id="CHEBI:46858"/>
        <dbReference type="ChEBI" id="CHEBI:57865"/>
        <dbReference type="ChEBI" id="CHEBI:90602"/>
    </reaction>
</comment>
<comment type="cofactor">
    <cofactor evidence="1">
        <name>Mg(2+)</name>
        <dbReference type="ChEBI" id="CHEBI:18420"/>
    </cofactor>
</comment>
<comment type="activity regulation">
    <text evidence="1">Uridylyltransferase (UTase) activity is inhibited by glutamine, while glutamine activates uridylyl-removing (UR) activity.</text>
</comment>
<comment type="domain">
    <text evidence="1">Has four distinct domains: an N-terminal nucleotidyltransferase (NT) domain responsible for UTase activity, a central HD domain that encodes UR activity, and two C-terminal ACT domains that seem to have a role in glutamine sensing.</text>
</comment>
<comment type="similarity">
    <text evidence="1">Belongs to the GlnD family.</text>
</comment>
<feature type="chain" id="PRO_0000192770" description="Bifunctional uridylyltransferase/uridylyl-removing enzyme">
    <location>
        <begin position="1"/>
        <end position="835"/>
    </location>
</feature>
<feature type="domain" description="HD" evidence="2">
    <location>
        <begin position="431"/>
        <end position="554"/>
    </location>
</feature>
<feature type="domain" description="ACT 1" evidence="1">
    <location>
        <begin position="651"/>
        <end position="736"/>
    </location>
</feature>
<feature type="domain" description="ACT 2" evidence="1">
    <location>
        <begin position="765"/>
        <end position="835"/>
    </location>
</feature>
<feature type="region of interest" description="Uridylyltransferase">
    <location>
        <begin position="1"/>
        <end position="316"/>
    </location>
</feature>
<feature type="region of interest" description="Uridylyl-removing">
    <location>
        <begin position="317"/>
        <end position="650"/>
    </location>
</feature>
<feature type="region of interest" description="Disordered" evidence="3">
    <location>
        <begin position="610"/>
        <end position="645"/>
    </location>
</feature>
<feature type="compositionally biased region" description="Pro residues" evidence="3">
    <location>
        <begin position="621"/>
        <end position="630"/>
    </location>
</feature>
<feature type="compositionally biased region" description="Low complexity" evidence="3">
    <location>
        <begin position="631"/>
        <end position="642"/>
    </location>
</feature>
<evidence type="ECO:0000255" key="1">
    <source>
        <dbReference type="HAMAP-Rule" id="MF_00277"/>
    </source>
</evidence>
<evidence type="ECO:0000255" key="2">
    <source>
        <dbReference type="PROSITE-ProRule" id="PRU01175"/>
    </source>
</evidence>
<evidence type="ECO:0000256" key="3">
    <source>
        <dbReference type="SAM" id="MobiDB-lite"/>
    </source>
</evidence>
<organism>
    <name type="scientific">Streptomyces coelicolor (strain ATCC BAA-471 / A3(2) / M145)</name>
    <dbReference type="NCBI Taxonomy" id="100226"/>
    <lineage>
        <taxon>Bacteria</taxon>
        <taxon>Bacillati</taxon>
        <taxon>Actinomycetota</taxon>
        <taxon>Actinomycetes</taxon>
        <taxon>Kitasatosporales</taxon>
        <taxon>Streptomycetaceae</taxon>
        <taxon>Streptomyces</taxon>
        <taxon>Streptomyces albidoflavus group</taxon>
    </lineage>
</organism>
<protein>
    <recommendedName>
        <fullName evidence="1">Bifunctional uridylyltransferase/uridylyl-removing enzyme</fullName>
        <shortName evidence="1">UTase/UR</shortName>
    </recommendedName>
    <alternativeName>
        <fullName evidence="1">Bifunctional [protein-PII] modification enzyme</fullName>
    </alternativeName>
    <alternativeName>
        <fullName evidence="1">Bifunctional nitrogen sensor protein</fullName>
    </alternativeName>
    <domain>
        <recommendedName>
            <fullName evidence="1">[Protein-PII] uridylyltransferase</fullName>
            <shortName evidence="1">PII uridylyltransferase</shortName>
            <shortName evidence="1">UTase</shortName>
            <ecNumber evidence="1">2.7.7.59</ecNumber>
        </recommendedName>
    </domain>
    <domain>
        <recommendedName>
            <fullName evidence="1">[Protein-PII]-UMP uridylyl-removing enzyme</fullName>
            <shortName evidence="1">UR</shortName>
            <ecNumber evidence="1">3.1.4.-</ecNumber>
        </recommendedName>
    </domain>
</protein>
<sequence>MTDEAEDSGPGGYAAARLRLLTEGARSGPPRRRALAELTDGWLAGLFGAATEEHTGISLVAVGGYGRGELSPRSDLDLLLLHDGRDDKAVAALADRLWYPVWDLGIDLDHSVRTPQQARKTAGQDLKVHLGLLDARHLAGDLGLTASLRTAVLADWRNQAPKRLPELRDLCAERAERQGELQFLLEPDLKEARGGLRDATALRAVAASWLADAPREGLAEARRRLLDVRDALHLATGRATDRLALQEQDQVAAELGLLDADALLRQVYEAARVISYAGDVTWREVGRVLRSRSVRPRLRAMMNGRNGGKPVAERSPLAEGVVEQDGEAVLARTARPERDPALPLRAAAAAAQAGLPLSRHAVRRLAATARPLPTPWPAEAREQLVTLLGSGRPTVQVWEALEAEGLVTRLLPDWERVRCRPQRNAVHLWTVDRHLIETAVRAAGFTRRVHRPDLLLIAALLHDIGKGWPGDHSVAGETIARDVAARIGFDGADTAVLATLVRHHLLLVETATRRDLDDPATVRAVAQAVGTEHTLELLHALTEADALATGPAAWSSWRGSLVADLVKRVSGVLAGEPQPEAESAAPTAEQERLAVEAFRTGGPVLALRAQTEPPADSAPAPSSPSSPSFPSPLSSPSSPSSADGPEPLGVELLIAVPDQAGVLPAVAGVLAMHRLTVRTAELRSVPLPDGVEGSVLLLDWRVAAQYGSLPQAARLRADLVRALDGTLDIAARLAERDAAHPRRRGVEPPPPRVTVAPAASRLATVIEVRAQDAPGLLFRLGRALEAAGVRVRSAHVSTLGANAVDAFYVTRGEGTPLPGDEAASVARGLEESLRT</sequence>
<accession>O69873</accession>
<dbReference type="EC" id="2.7.7.59" evidence="1"/>
<dbReference type="EC" id="3.1.4.-" evidence="1"/>
<dbReference type="EMBL" id="AL939124">
    <property type="protein sequence ID" value="CAA19377.1"/>
    <property type="molecule type" value="Genomic_DNA"/>
</dbReference>
<dbReference type="PIR" id="T34770">
    <property type="entry name" value="T34770"/>
</dbReference>
<dbReference type="RefSeq" id="NP_629719.1">
    <property type="nucleotide sequence ID" value="NC_003888.3"/>
</dbReference>
<dbReference type="SMR" id="O69873"/>
<dbReference type="FunCoup" id="O69873">
    <property type="interactions" value="69"/>
</dbReference>
<dbReference type="STRING" id="100226.gene:17763243"/>
<dbReference type="PaxDb" id="100226-SCO5585"/>
<dbReference type="KEGG" id="sco:SCO5585"/>
<dbReference type="PATRIC" id="fig|100226.15.peg.5676"/>
<dbReference type="eggNOG" id="COG2844">
    <property type="taxonomic scope" value="Bacteria"/>
</dbReference>
<dbReference type="HOGENOM" id="CLU_012833_2_0_11"/>
<dbReference type="InParanoid" id="O69873"/>
<dbReference type="OrthoDB" id="9758038at2"/>
<dbReference type="PhylomeDB" id="O69873"/>
<dbReference type="Proteomes" id="UP000001973">
    <property type="component" value="Chromosome"/>
</dbReference>
<dbReference type="GO" id="GO:0008773">
    <property type="term" value="F:[protein-PII] uridylyltransferase activity"/>
    <property type="evidence" value="ECO:0000318"/>
    <property type="project" value="GO_Central"/>
</dbReference>
<dbReference type="GO" id="GO:0008081">
    <property type="term" value="F:phosphoric diester hydrolase activity"/>
    <property type="evidence" value="ECO:0007669"/>
    <property type="project" value="UniProtKB-UniRule"/>
</dbReference>
<dbReference type="GO" id="GO:0006808">
    <property type="term" value="P:regulation of nitrogen utilization"/>
    <property type="evidence" value="ECO:0007669"/>
    <property type="project" value="UniProtKB-UniRule"/>
</dbReference>
<dbReference type="CDD" id="cd04899">
    <property type="entry name" value="ACT_ACR-UUR-like_2"/>
    <property type="match status" value="1"/>
</dbReference>
<dbReference type="CDD" id="cd00077">
    <property type="entry name" value="HDc"/>
    <property type="match status" value="1"/>
</dbReference>
<dbReference type="Gene3D" id="1.10.3090.10">
    <property type="entry name" value="cca-adding enzyme, domain 2"/>
    <property type="match status" value="1"/>
</dbReference>
<dbReference type="HAMAP" id="MF_00277">
    <property type="entry name" value="PII_uridylyl_transf"/>
    <property type="match status" value="1"/>
</dbReference>
<dbReference type="InterPro" id="IPR045865">
    <property type="entry name" value="ACT-like_dom_sf"/>
</dbReference>
<dbReference type="InterPro" id="IPR002912">
    <property type="entry name" value="ACT_dom"/>
</dbReference>
<dbReference type="InterPro" id="IPR003607">
    <property type="entry name" value="HD/PDEase_dom"/>
</dbReference>
<dbReference type="InterPro" id="IPR006674">
    <property type="entry name" value="HD_domain"/>
</dbReference>
<dbReference type="InterPro" id="IPR043519">
    <property type="entry name" value="NT_sf"/>
</dbReference>
<dbReference type="InterPro" id="IPR013546">
    <property type="entry name" value="PII_UdlTrfase/GS_AdlTrfase"/>
</dbReference>
<dbReference type="InterPro" id="IPR002934">
    <property type="entry name" value="Polymerase_NTP_transf_dom"/>
</dbReference>
<dbReference type="InterPro" id="IPR010043">
    <property type="entry name" value="UTase/UR"/>
</dbReference>
<dbReference type="NCBIfam" id="NF002895">
    <property type="entry name" value="PRK03381.1"/>
    <property type="match status" value="1"/>
</dbReference>
<dbReference type="NCBIfam" id="TIGR01693">
    <property type="entry name" value="UTase_glnD"/>
    <property type="match status" value="1"/>
</dbReference>
<dbReference type="PANTHER" id="PTHR47320">
    <property type="entry name" value="BIFUNCTIONAL URIDYLYLTRANSFERASE/URIDYLYL-REMOVING ENZYME"/>
    <property type="match status" value="1"/>
</dbReference>
<dbReference type="PANTHER" id="PTHR47320:SF1">
    <property type="entry name" value="BIFUNCTIONAL URIDYLYLTRANSFERASE_URIDYLYL-REMOVING ENZYME"/>
    <property type="match status" value="1"/>
</dbReference>
<dbReference type="Pfam" id="PF01842">
    <property type="entry name" value="ACT"/>
    <property type="match status" value="1"/>
</dbReference>
<dbReference type="Pfam" id="PF08335">
    <property type="entry name" value="GlnD_UR_UTase"/>
    <property type="match status" value="1"/>
</dbReference>
<dbReference type="Pfam" id="PF01966">
    <property type="entry name" value="HD"/>
    <property type="match status" value="1"/>
</dbReference>
<dbReference type="Pfam" id="PF01909">
    <property type="entry name" value="NTP_transf_2"/>
    <property type="match status" value="1"/>
</dbReference>
<dbReference type="PIRSF" id="PIRSF006288">
    <property type="entry name" value="PII_uridyltransf"/>
    <property type="match status" value="1"/>
</dbReference>
<dbReference type="SMART" id="SM00471">
    <property type="entry name" value="HDc"/>
    <property type="match status" value="1"/>
</dbReference>
<dbReference type="SUPFAM" id="SSF55021">
    <property type="entry name" value="ACT-like"/>
    <property type="match status" value="1"/>
</dbReference>
<dbReference type="SUPFAM" id="SSF109604">
    <property type="entry name" value="HD-domain/PDEase-like"/>
    <property type="match status" value="1"/>
</dbReference>
<dbReference type="SUPFAM" id="SSF81301">
    <property type="entry name" value="Nucleotidyltransferase"/>
    <property type="match status" value="1"/>
</dbReference>
<dbReference type="SUPFAM" id="SSF81593">
    <property type="entry name" value="Nucleotidyltransferase substrate binding subunit/domain"/>
    <property type="match status" value="1"/>
</dbReference>
<dbReference type="PROSITE" id="PS51671">
    <property type="entry name" value="ACT"/>
    <property type="match status" value="2"/>
</dbReference>
<dbReference type="PROSITE" id="PS51831">
    <property type="entry name" value="HD"/>
    <property type="match status" value="1"/>
</dbReference>
<name>GLND_STRCO</name>